<sequence>MSENKLFCAIVFLTSLFCSTCSQGTRFVHSAALDAERRYNIKWGFDESTITFEIEVETRGYVGFGLSPTGAMSSSDIVIGGVLNGSPYLLDYFTDSNRKVHRDPLQNYELLYGRENDTHTVLAFSRNLQTCDDNDKIITGSTVRVIWAFHAEDVGESGLVYHGMNRGRKSLRLLNPGTGPSIPAGTAFFDLQNKEVPVPHKDTTYWCQIFRFPEMKKKHHVIRIEPLIQKGHENLVHHILLYQCDSNLNKSEVNRGHECYHPNMPDSFLTCETVLFAWAIGGEGFTYPPHVGMSIGTSIDPVYVQLEIHFDNPSLQGGIVDSSGLRLYYSPSLRRYDAGVIETGVWVSLYHMLPPGMTDYITEGHCTQECLQESLDSEMPSGVHVFAVLLHAHLAGRAITARHFRQQLELQPLASDDQFDFNFQEFQPLSQERLILPGDSLITECRYNTKGRMNMTWGGLSTREEMCLSFLLYYPRVNLAKCESLPEIAGQLKFIGVTEIQEPVTTWPFVIKSPKKYSNLSFTEAMDKYKWTMKKGKSFNDIVRKLPMNVRCSKTGQDEWSIQGMIVSPPEVRSEQTSTAVVACRKDSAIQCEHSLALLLTACLLLILQTCLHL</sequence>
<feature type="signal peptide" evidence="2">
    <location>
        <begin position="1"/>
        <end position="22"/>
    </location>
</feature>
<feature type="chain" id="PRO_0000305220" description="DBH-like monooxygenase protein 1 homolog">
    <location>
        <begin position="23"/>
        <end position="614"/>
    </location>
</feature>
<feature type="topological domain" description="Lumenal" evidence="2">
    <location>
        <begin position="23"/>
        <end position="593"/>
    </location>
</feature>
<feature type="transmembrane region" description="Helical" evidence="2">
    <location>
        <begin position="594"/>
        <end position="612"/>
    </location>
</feature>
<feature type="domain" description="DOMON" evidence="3">
    <location>
        <begin position="37"/>
        <end position="150"/>
    </location>
</feature>
<feature type="active site" evidence="2">
    <location>
        <position position="205"/>
    </location>
</feature>
<feature type="active site" evidence="2">
    <location>
        <position position="391"/>
    </location>
</feature>
<feature type="binding site" evidence="1">
    <location>
        <position position="237"/>
    </location>
    <ligand>
        <name>Cu cation</name>
        <dbReference type="ChEBI" id="CHEBI:23378"/>
        <label>A</label>
    </ligand>
</feature>
<feature type="binding site" evidence="1">
    <location>
        <position position="238"/>
    </location>
    <ligand>
        <name>Cu cation</name>
        <dbReference type="ChEBI" id="CHEBI:23378"/>
        <label>A</label>
    </ligand>
</feature>
<feature type="binding site" evidence="1">
    <location>
        <position position="309"/>
    </location>
    <ligand>
        <name>Cu cation</name>
        <dbReference type="ChEBI" id="CHEBI:23378"/>
        <label>A</label>
    </ligand>
</feature>
<feature type="binding site" evidence="1">
    <location>
        <position position="391"/>
    </location>
    <ligand>
        <name>Cu cation</name>
        <dbReference type="ChEBI" id="CHEBI:23378"/>
        <label>B</label>
    </ligand>
</feature>
<feature type="binding site" evidence="1">
    <location>
        <position position="393"/>
    </location>
    <ligand>
        <name>Cu cation</name>
        <dbReference type="ChEBI" id="CHEBI:23378"/>
        <label>B</label>
    </ligand>
</feature>
<feature type="binding site" evidence="1">
    <location>
        <position position="466"/>
    </location>
    <ligand>
        <name>Cu cation</name>
        <dbReference type="ChEBI" id="CHEBI:23378"/>
        <label>B</label>
    </ligand>
</feature>
<feature type="glycosylation site" description="N-linked (GlcNAc...) asparagine" evidence="2">
    <location>
        <position position="116"/>
    </location>
</feature>
<feature type="glycosylation site" description="N-linked (GlcNAc...) asparagine" evidence="2">
    <location>
        <position position="249"/>
    </location>
</feature>
<feature type="glycosylation site" description="N-linked (GlcNAc...) asparagine" evidence="2">
    <location>
        <position position="454"/>
    </location>
</feature>
<feature type="glycosylation site" description="N-linked (GlcNAc...) asparagine" evidence="2">
    <location>
        <position position="519"/>
    </location>
</feature>
<feature type="disulfide bond" evidence="1">
    <location>
        <begin position="207"/>
        <end position="259"/>
    </location>
</feature>
<feature type="disulfide bond" evidence="1">
    <location>
        <begin position="244"/>
        <end position="271"/>
    </location>
</feature>
<feature type="disulfide bond" evidence="1">
    <location>
        <begin position="366"/>
        <end position="482"/>
    </location>
</feature>
<feature type="disulfide bond" evidence="1">
    <location>
        <begin position="370"/>
        <end position="552"/>
    </location>
</feature>
<feature type="disulfide bond" evidence="1">
    <location>
        <begin position="445"/>
        <end position="467"/>
    </location>
</feature>
<feature type="splice variant" id="VSP_028290" description="In isoform 2." evidence="4">
    <original>GSTVRVIWAFHAEDVGESGL</original>
    <variation>VGLTRCIILWLQNSERNSFR</variation>
    <location>
        <begin position="140"/>
        <end position="159"/>
    </location>
</feature>
<feature type="splice variant" id="VSP_028291" description="In isoform 2." evidence="4">
    <location>
        <begin position="160"/>
        <end position="614"/>
    </location>
</feature>
<feature type="splice variant" id="VSP_031643" description="In isoform 1." evidence="5">
    <location>
        <begin position="374"/>
        <end position="378"/>
    </location>
</feature>
<feature type="sequence conflict" description="In Ref. 2; AAI35060." evidence="5" ref="2">
    <original>Y</original>
    <variation>H</variation>
    <location>
        <position position="39"/>
    </location>
</feature>
<feature type="sequence conflict" description="In Ref. 1; CAM46906 and 2; AAI35060." evidence="5" ref="1 2">
    <original>I</original>
    <variation>V</variation>
    <location>
        <position position="54"/>
    </location>
</feature>
<feature type="sequence conflict" description="In Ref. 1; CAM46906." evidence="5" ref="1">
    <original>A</original>
    <variation>T</variation>
    <location>
        <position position="151"/>
    </location>
</feature>
<feature type="sequence conflict" description="In Ref. 1; CAM46906." evidence="5" ref="1">
    <original>P</original>
    <variation>S</variation>
    <location>
        <position position="180"/>
    </location>
</feature>
<feature type="sequence conflict" description="In Ref. 1; CAM46906." evidence="5" ref="1">
    <original>T</original>
    <variation>S</variation>
    <location>
        <position position="532"/>
    </location>
</feature>
<feature type="sequence conflict" description="In Ref. 1; CAM46906." evidence="5" ref="1">
    <original>Q</original>
    <variation>K</variation>
    <location>
        <position position="576"/>
    </location>
</feature>
<gene>
    <name type="primary">moxd1</name>
    <name type="ORF">si:ch211-193l17.1</name>
    <name type="ORF">si:dkey-266k12.5</name>
    <name type="ORF">si:dkeyp-119b4.5</name>
</gene>
<protein>
    <recommendedName>
        <fullName>DBH-like monooxygenase protein 1 homolog</fullName>
        <ecNumber>1.14.17.-</ecNumber>
    </recommendedName>
</protein>
<reference key="1">
    <citation type="journal article" date="2013" name="Nature">
        <title>The zebrafish reference genome sequence and its relationship to the human genome.</title>
        <authorList>
            <person name="Howe K."/>
            <person name="Clark M.D."/>
            <person name="Torroja C.F."/>
            <person name="Torrance J."/>
            <person name="Berthelot C."/>
            <person name="Muffato M."/>
            <person name="Collins J.E."/>
            <person name="Humphray S."/>
            <person name="McLaren K."/>
            <person name="Matthews L."/>
            <person name="McLaren S."/>
            <person name="Sealy I."/>
            <person name="Caccamo M."/>
            <person name="Churcher C."/>
            <person name="Scott C."/>
            <person name="Barrett J.C."/>
            <person name="Koch R."/>
            <person name="Rauch G.J."/>
            <person name="White S."/>
            <person name="Chow W."/>
            <person name="Kilian B."/>
            <person name="Quintais L.T."/>
            <person name="Guerra-Assuncao J.A."/>
            <person name="Zhou Y."/>
            <person name="Gu Y."/>
            <person name="Yen J."/>
            <person name="Vogel J.H."/>
            <person name="Eyre T."/>
            <person name="Redmond S."/>
            <person name="Banerjee R."/>
            <person name="Chi J."/>
            <person name="Fu B."/>
            <person name="Langley E."/>
            <person name="Maguire S.F."/>
            <person name="Laird G.K."/>
            <person name="Lloyd D."/>
            <person name="Kenyon E."/>
            <person name="Donaldson S."/>
            <person name="Sehra H."/>
            <person name="Almeida-King J."/>
            <person name="Loveland J."/>
            <person name="Trevanion S."/>
            <person name="Jones M."/>
            <person name="Quail M."/>
            <person name="Willey D."/>
            <person name="Hunt A."/>
            <person name="Burton J."/>
            <person name="Sims S."/>
            <person name="McLay K."/>
            <person name="Plumb B."/>
            <person name="Davis J."/>
            <person name="Clee C."/>
            <person name="Oliver K."/>
            <person name="Clark R."/>
            <person name="Riddle C."/>
            <person name="Elliot D."/>
            <person name="Threadgold G."/>
            <person name="Harden G."/>
            <person name="Ware D."/>
            <person name="Begum S."/>
            <person name="Mortimore B."/>
            <person name="Kerry G."/>
            <person name="Heath P."/>
            <person name="Phillimore B."/>
            <person name="Tracey A."/>
            <person name="Corby N."/>
            <person name="Dunn M."/>
            <person name="Johnson C."/>
            <person name="Wood J."/>
            <person name="Clark S."/>
            <person name="Pelan S."/>
            <person name="Griffiths G."/>
            <person name="Smith M."/>
            <person name="Glithero R."/>
            <person name="Howden P."/>
            <person name="Barker N."/>
            <person name="Lloyd C."/>
            <person name="Stevens C."/>
            <person name="Harley J."/>
            <person name="Holt K."/>
            <person name="Panagiotidis G."/>
            <person name="Lovell J."/>
            <person name="Beasley H."/>
            <person name="Henderson C."/>
            <person name="Gordon D."/>
            <person name="Auger K."/>
            <person name="Wright D."/>
            <person name="Collins J."/>
            <person name="Raisen C."/>
            <person name="Dyer L."/>
            <person name="Leung K."/>
            <person name="Robertson L."/>
            <person name="Ambridge K."/>
            <person name="Leongamornlert D."/>
            <person name="McGuire S."/>
            <person name="Gilderthorp R."/>
            <person name="Griffiths C."/>
            <person name="Manthravadi D."/>
            <person name="Nichol S."/>
            <person name="Barker G."/>
            <person name="Whitehead S."/>
            <person name="Kay M."/>
            <person name="Brown J."/>
            <person name="Murnane C."/>
            <person name="Gray E."/>
            <person name="Humphries M."/>
            <person name="Sycamore N."/>
            <person name="Barker D."/>
            <person name="Saunders D."/>
            <person name="Wallis J."/>
            <person name="Babbage A."/>
            <person name="Hammond S."/>
            <person name="Mashreghi-Mohammadi M."/>
            <person name="Barr L."/>
            <person name="Martin S."/>
            <person name="Wray P."/>
            <person name="Ellington A."/>
            <person name="Matthews N."/>
            <person name="Ellwood M."/>
            <person name="Woodmansey R."/>
            <person name="Clark G."/>
            <person name="Cooper J."/>
            <person name="Tromans A."/>
            <person name="Grafham D."/>
            <person name="Skuce C."/>
            <person name="Pandian R."/>
            <person name="Andrews R."/>
            <person name="Harrison E."/>
            <person name="Kimberley A."/>
            <person name="Garnett J."/>
            <person name="Fosker N."/>
            <person name="Hall R."/>
            <person name="Garner P."/>
            <person name="Kelly D."/>
            <person name="Bird C."/>
            <person name="Palmer S."/>
            <person name="Gehring I."/>
            <person name="Berger A."/>
            <person name="Dooley C.M."/>
            <person name="Ersan-Urun Z."/>
            <person name="Eser C."/>
            <person name="Geiger H."/>
            <person name="Geisler M."/>
            <person name="Karotki L."/>
            <person name="Kirn A."/>
            <person name="Konantz J."/>
            <person name="Konantz M."/>
            <person name="Oberlander M."/>
            <person name="Rudolph-Geiger S."/>
            <person name="Teucke M."/>
            <person name="Lanz C."/>
            <person name="Raddatz G."/>
            <person name="Osoegawa K."/>
            <person name="Zhu B."/>
            <person name="Rapp A."/>
            <person name="Widaa S."/>
            <person name="Langford C."/>
            <person name="Yang F."/>
            <person name="Schuster S.C."/>
            <person name="Carter N.P."/>
            <person name="Harrow J."/>
            <person name="Ning Z."/>
            <person name="Herrero J."/>
            <person name="Searle S.M."/>
            <person name="Enright A."/>
            <person name="Geisler R."/>
            <person name="Plasterk R.H."/>
            <person name="Lee C."/>
            <person name="Westerfield M."/>
            <person name="de Jong P.J."/>
            <person name="Zon L.I."/>
            <person name="Postlethwait J.H."/>
            <person name="Nusslein-Volhard C."/>
            <person name="Hubbard T.J."/>
            <person name="Roest Crollius H."/>
            <person name="Rogers J."/>
            <person name="Stemple D.L."/>
        </authorList>
    </citation>
    <scope>NUCLEOTIDE SEQUENCE [LARGE SCALE GENOMIC DNA]</scope>
    <source>
        <strain>Tuebingen</strain>
    </source>
</reference>
<reference key="2">
    <citation type="submission" date="2007-03" db="EMBL/GenBank/DDBJ databases">
        <authorList>
            <consortium name="NIH - Zebrafish Gene Collection (ZGC) project"/>
        </authorList>
    </citation>
    <scope>NUCLEOTIDE SEQUENCE [LARGE SCALE MRNA] (ISOFORM 2)</scope>
    <source>
        <tissue>Olfactory epithelium</tissue>
    </source>
</reference>
<evidence type="ECO:0000250" key="1"/>
<evidence type="ECO:0000255" key="2"/>
<evidence type="ECO:0000255" key="3">
    <source>
        <dbReference type="PROSITE-ProRule" id="PRU00246"/>
    </source>
</evidence>
<evidence type="ECO:0000303" key="4">
    <source ref="2"/>
</evidence>
<evidence type="ECO:0000305" key="5"/>
<accession>Q5TZ24</accession>
<accession>A3KQJ8</accession>
<accession>A4IGE3</accession>
<comment type="cofactor">
    <cofactor evidence="1">
        <name>Cu(2+)</name>
        <dbReference type="ChEBI" id="CHEBI:29036"/>
    </cofactor>
    <text evidence="1">Binds 2 copper ions per subunit.</text>
</comment>
<comment type="subcellular location">
    <subcellularLocation>
        <location evidence="1">Endoplasmic reticulum membrane</location>
        <topology evidence="1">Single-pass type I membrane protein</topology>
    </subcellularLocation>
</comment>
<comment type="alternative products">
    <event type="alternative splicing"/>
    <isoform>
        <id>Q5TZ24-3</id>
        <name>3</name>
        <sequence type="displayed"/>
    </isoform>
    <isoform>
        <id>Q5TZ24-1</id>
        <name>1</name>
        <sequence type="described" ref="VSP_031643"/>
    </isoform>
    <isoform>
        <id>Q5TZ24-2</id>
        <name>2</name>
        <sequence type="described" ref="VSP_028290 VSP_028291"/>
    </isoform>
</comment>
<comment type="similarity">
    <text evidence="5">Belongs to the copper type II ascorbate-dependent monooxygenase family.</text>
</comment>
<comment type="sequence caution" evidence="5">
    <conflict type="erroneous initiation">
        <sequence resource="EMBL-CDS" id="CAM46906"/>
    </conflict>
</comment>
<organism>
    <name type="scientific">Danio rerio</name>
    <name type="common">Zebrafish</name>
    <name type="synonym">Brachydanio rerio</name>
    <dbReference type="NCBI Taxonomy" id="7955"/>
    <lineage>
        <taxon>Eukaryota</taxon>
        <taxon>Metazoa</taxon>
        <taxon>Chordata</taxon>
        <taxon>Craniata</taxon>
        <taxon>Vertebrata</taxon>
        <taxon>Euteleostomi</taxon>
        <taxon>Actinopterygii</taxon>
        <taxon>Neopterygii</taxon>
        <taxon>Teleostei</taxon>
        <taxon>Ostariophysi</taxon>
        <taxon>Cypriniformes</taxon>
        <taxon>Danionidae</taxon>
        <taxon>Danioninae</taxon>
        <taxon>Danio</taxon>
    </lineage>
</organism>
<dbReference type="EC" id="1.14.17.-"/>
<dbReference type="EMBL" id="BX530723">
    <property type="protein sequence ID" value="CAH69122.1"/>
    <property type="molecule type" value="Genomic_DNA"/>
</dbReference>
<dbReference type="EMBL" id="BX323010">
    <property type="protein sequence ID" value="CAH69122.1"/>
    <property type="status" value="JOINED"/>
    <property type="molecule type" value="Genomic_DNA"/>
</dbReference>
<dbReference type="EMBL" id="BX323010">
    <property type="protein sequence ID" value="CAI21101.1"/>
    <property type="molecule type" value="Genomic_DNA"/>
</dbReference>
<dbReference type="EMBL" id="BX530723">
    <property type="protein sequence ID" value="CAI21101.1"/>
    <property type="status" value="JOINED"/>
    <property type="molecule type" value="Genomic_DNA"/>
</dbReference>
<dbReference type="EMBL" id="BX682549">
    <property type="protein sequence ID" value="CAM46906.1"/>
    <property type="status" value="ALT_INIT"/>
    <property type="molecule type" value="Genomic_DNA"/>
</dbReference>
<dbReference type="EMBL" id="BC135059">
    <property type="protein sequence ID" value="AAI35060.1"/>
    <property type="molecule type" value="mRNA"/>
</dbReference>
<dbReference type="RefSeq" id="NP_001038671.1">
    <molecule id="Q5TZ24-1"/>
    <property type="nucleotide sequence ID" value="NM_001045206.2"/>
</dbReference>
<dbReference type="RefSeq" id="XP_005160648.1">
    <molecule id="Q5TZ24-3"/>
    <property type="nucleotide sequence ID" value="XM_005160591.5"/>
</dbReference>
<dbReference type="SMR" id="Q5TZ24"/>
<dbReference type="FunCoup" id="Q5TZ24">
    <property type="interactions" value="81"/>
</dbReference>
<dbReference type="STRING" id="7955.ENSDARP00000111612"/>
<dbReference type="GlyCosmos" id="Q5TZ24">
    <property type="glycosylation" value="4 sites, No reported glycans"/>
</dbReference>
<dbReference type="PaxDb" id="7955-ENSDARP00000105872"/>
<dbReference type="Ensembl" id="ENSDART00000130494">
    <molecule id="Q5TZ24-3"/>
    <property type="protein sequence ID" value="ENSDARP00000105872"/>
    <property type="gene ID" value="ENSDARG00000031136"/>
</dbReference>
<dbReference type="GeneID" id="570584"/>
<dbReference type="KEGG" id="dre:570584"/>
<dbReference type="AGR" id="ZFIN:ZDB-GENE-030131-9320"/>
<dbReference type="CTD" id="26002"/>
<dbReference type="ZFIN" id="ZDB-GENE-030131-9320">
    <property type="gene designation" value="moxd1"/>
</dbReference>
<dbReference type="eggNOG" id="KOG3568">
    <property type="taxonomic scope" value="Eukaryota"/>
</dbReference>
<dbReference type="HOGENOM" id="CLU_1660104_0_0_1"/>
<dbReference type="InParanoid" id="Q5TZ24"/>
<dbReference type="OMA" id="AMENDTH"/>
<dbReference type="OrthoDB" id="129121at2759"/>
<dbReference type="PhylomeDB" id="Q5TZ24"/>
<dbReference type="TreeFam" id="TF320698"/>
<dbReference type="PRO" id="PR:Q5TZ24"/>
<dbReference type="Proteomes" id="UP000000437">
    <property type="component" value="Alternate scaffold 20"/>
</dbReference>
<dbReference type="Proteomes" id="UP000000437">
    <property type="component" value="Chromosome 20"/>
</dbReference>
<dbReference type="Bgee" id="ENSDARG00000031136">
    <property type="expression patterns" value="Expressed in granulocyte and 16 other cell types or tissues"/>
</dbReference>
<dbReference type="GO" id="GO:0005789">
    <property type="term" value="C:endoplasmic reticulum membrane"/>
    <property type="evidence" value="ECO:0007669"/>
    <property type="project" value="UniProtKB-SubCell"/>
</dbReference>
<dbReference type="GO" id="GO:0005615">
    <property type="term" value="C:extracellular space"/>
    <property type="evidence" value="ECO:0000318"/>
    <property type="project" value="GO_Central"/>
</dbReference>
<dbReference type="GO" id="GO:0030667">
    <property type="term" value="C:secretory granule membrane"/>
    <property type="evidence" value="ECO:0000318"/>
    <property type="project" value="GO_Central"/>
</dbReference>
<dbReference type="GO" id="GO:0005507">
    <property type="term" value="F:copper ion binding"/>
    <property type="evidence" value="ECO:0000318"/>
    <property type="project" value="GO_Central"/>
</dbReference>
<dbReference type="GO" id="GO:0004500">
    <property type="term" value="F:dopamine beta-monooxygenase activity"/>
    <property type="evidence" value="ECO:0000318"/>
    <property type="project" value="GO_Central"/>
</dbReference>
<dbReference type="GO" id="GO:0042420">
    <property type="term" value="P:dopamine catabolic process"/>
    <property type="evidence" value="ECO:0000318"/>
    <property type="project" value="GO_Central"/>
</dbReference>
<dbReference type="GO" id="GO:0042421">
    <property type="term" value="P:norepinephrine biosynthetic process"/>
    <property type="evidence" value="ECO:0000318"/>
    <property type="project" value="GO_Central"/>
</dbReference>
<dbReference type="GO" id="GO:0006589">
    <property type="term" value="P:octopamine biosynthetic process"/>
    <property type="evidence" value="ECO:0000318"/>
    <property type="project" value="GO_Central"/>
</dbReference>
<dbReference type="CDD" id="cd09631">
    <property type="entry name" value="DOMON_DOH"/>
    <property type="match status" value="1"/>
</dbReference>
<dbReference type="FunFam" id="2.60.120.310:FF:000002">
    <property type="entry name" value="DBH-like monooxygenase protein 1"/>
    <property type="match status" value="1"/>
</dbReference>
<dbReference type="FunFam" id="2.60.120.230:FF:000001">
    <property type="entry name" value="Monooxygenase, DBH-like 1"/>
    <property type="match status" value="1"/>
</dbReference>
<dbReference type="FunFam" id="2.60.40.1210:FF:000001">
    <property type="entry name" value="Monooxygenase, DBH-like 1, like"/>
    <property type="match status" value="1"/>
</dbReference>
<dbReference type="Gene3D" id="2.60.120.230">
    <property type="match status" value="1"/>
</dbReference>
<dbReference type="Gene3D" id="2.60.120.310">
    <property type="entry name" value="Copper type II, ascorbate-dependent monooxygenase, N-terminal domain"/>
    <property type="match status" value="1"/>
</dbReference>
<dbReference type="InterPro" id="IPR014784">
    <property type="entry name" value="Cu2_ascorb_mOase-like_C"/>
</dbReference>
<dbReference type="InterPro" id="IPR000323">
    <property type="entry name" value="Cu2_ascorb_mOase_N"/>
</dbReference>
<dbReference type="InterPro" id="IPR036939">
    <property type="entry name" value="Cu2_ascorb_mOase_N_sf"/>
</dbReference>
<dbReference type="InterPro" id="IPR024548">
    <property type="entry name" value="Cu2_monoox_C"/>
</dbReference>
<dbReference type="InterPro" id="IPR000945">
    <property type="entry name" value="DBH-like"/>
</dbReference>
<dbReference type="InterPro" id="IPR045266">
    <property type="entry name" value="DOH_DOMON"/>
</dbReference>
<dbReference type="InterPro" id="IPR005018">
    <property type="entry name" value="DOMON_domain"/>
</dbReference>
<dbReference type="InterPro" id="IPR008977">
    <property type="entry name" value="PHM/PNGase_F_dom_sf"/>
</dbReference>
<dbReference type="InterPro" id="IPR028460">
    <property type="entry name" value="Tbh/DBH"/>
</dbReference>
<dbReference type="PANTHER" id="PTHR10157:SF42">
    <property type="entry name" value="DBH-LIKE MONOOXYGENASE PROTEIN 1 HOMOLOG"/>
    <property type="match status" value="1"/>
</dbReference>
<dbReference type="PANTHER" id="PTHR10157">
    <property type="entry name" value="DOPAMINE BETA HYDROXYLASE RELATED"/>
    <property type="match status" value="1"/>
</dbReference>
<dbReference type="Pfam" id="PF03712">
    <property type="entry name" value="Cu2_monoox_C"/>
    <property type="match status" value="1"/>
</dbReference>
<dbReference type="Pfam" id="PF01082">
    <property type="entry name" value="Cu2_monooxygen"/>
    <property type="match status" value="1"/>
</dbReference>
<dbReference type="Pfam" id="PF03351">
    <property type="entry name" value="DOMON"/>
    <property type="match status" value="1"/>
</dbReference>
<dbReference type="PRINTS" id="PR00767">
    <property type="entry name" value="DBMONOXGNASE"/>
</dbReference>
<dbReference type="SMART" id="SM00664">
    <property type="entry name" value="DoH"/>
    <property type="match status" value="1"/>
</dbReference>
<dbReference type="SUPFAM" id="SSF49742">
    <property type="entry name" value="PHM/PNGase F"/>
    <property type="match status" value="2"/>
</dbReference>
<dbReference type="PROSITE" id="PS50836">
    <property type="entry name" value="DOMON"/>
    <property type="match status" value="1"/>
</dbReference>
<name>MOXD1_DANRE</name>
<proteinExistence type="evidence at transcript level"/>
<keyword id="KW-0025">Alternative splicing</keyword>
<keyword id="KW-0186">Copper</keyword>
<keyword id="KW-1015">Disulfide bond</keyword>
<keyword id="KW-0256">Endoplasmic reticulum</keyword>
<keyword id="KW-0325">Glycoprotein</keyword>
<keyword id="KW-0472">Membrane</keyword>
<keyword id="KW-0479">Metal-binding</keyword>
<keyword id="KW-0503">Monooxygenase</keyword>
<keyword id="KW-0560">Oxidoreductase</keyword>
<keyword id="KW-1185">Reference proteome</keyword>
<keyword id="KW-0732">Signal</keyword>
<keyword id="KW-0812">Transmembrane</keyword>
<keyword id="KW-1133">Transmembrane helix</keyword>